<feature type="chain" id="PRO_1000057670" description="Holo-[acyl-carrier-protein] synthase">
    <location>
        <begin position="1"/>
        <end position="126"/>
    </location>
</feature>
<feature type="binding site" evidence="1">
    <location>
        <position position="9"/>
    </location>
    <ligand>
        <name>Mg(2+)</name>
        <dbReference type="ChEBI" id="CHEBI:18420"/>
    </ligand>
</feature>
<feature type="binding site" evidence="1">
    <location>
        <position position="58"/>
    </location>
    <ligand>
        <name>Mg(2+)</name>
        <dbReference type="ChEBI" id="CHEBI:18420"/>
    </ligand>
</feature>
<comment type="function">
    <text evidence="1">Transfers the 4'-phosphopantetheine moiety from coenzyme A to a Ser of acyl-carrier-protein.</text>
</comment>
<comment type="catalytic activity">
    <reaction evidence="1">
        <text>apo-[ACP] + CoA = holo-[ACP] + adenosine 3',5'-bisphosphate + H(+)</text>
        <dbReference type="Rhea" id="RHEA:12068"/>
        <dbReference type="Rhea" id="RHEA-COMP:9685"/>
        <dbReference type="Rhea" id="RHEA-COMP:9690"/>
        <dbReference type="ChEBI" id="CHEBI:15378"/>
        <dbReference type="ChEBI" id="CHEBI:29999"/>
        <dbReference type="ChEBI" id="CHEBI:57287"/>
        <dbReference type="ChEBI" id="CHEBI:58343"/>
        <dbReference type="ChEBI" id="CHEBI:64479"/>
        <dbReference type="EC" id="2.7.8.7"/>
    </reaction>
</comment>
<comment type="cofactor">
    <cofactor evidence="1">
        <name>Mg(2+)</name>
        <dbReference type="ChEBI" id="CHEBI:18420"/>
    </cofactor>
</comment>
<comment type="subcellular location">
    <subcellularLocation>
        <location evidence="1">Cytoplasm</location>
    </subcellularLocation>
</comment>
<comment type="similarity">
    <text evidence="1">Belongs to the P-Pant transferase superfamily. AcpS family.</text>
</comment>
<accession>A4WDD4</accession>
<organism>
    <name type="scientific">Enterobacter sp. (strain 638)</name>
    <dbReference type="NCBI Taxonomy" id="399742"/>
    <lineage>
        <taxon>Bacteria</taxon>
        <taxon>Pseudomonadati</taxon>
        <taxon>Pseudomonadota</taxon>
        <taxon>Gammaproteobacteria</taxon>
        <taxon>Enterobacterales</taxon>
        <taxon>Enterobacteriaceae</taxon>
        <taxon>Enterobacter</taxon>
    </lineage>
</organism>
<keyword id="KW-0963">Cytoplasm</keyword>
<keyword id="KW-0275">Fatty acid biosynthesis</keyword>
<keyword id="KW-0276">Fatty acid metabolism</keyword>
<keyword id="KW-0444">Lipid biosynthesis</keyword>
<keyword id="KW-0443">Lipid metabolism</keyword>
<keyword id="KW-0460">Magnesium</keyword>
<keyword id="KW-0479">Metal-binding</keyword>
<keyword id="KW-0808">Transferase</keyword>
<proteinExistence type="inferred from homology"/>
<dbReference type="EC" id="2.7.8.7" evidence="1"/>
<dbReference type="EMBL" id="CP000653">
    <property type="protein sequence ID" value="ABP61714.1"/>
    <property type="molecule type" value="Genomic_DNA"/>
</dbReference>
<dbReference type="RefSeq" id="WP_015960044.1">
    <property type="nucleotide sequence ID" value="NC_009436.1"/>
</dbReference>
<dbReference type="SMR" id="A4WDD4"/>
<dbReference type="STRING" id="399742.Ent638_3050"/>
<dbReference type="GeneID" id="93305991"/>
<dbReference type="KEGG" id="ent:Ent638_3050"/>
<dbReference type="eggNOG" id="COG0736">
    <property type="taxonomic scope" value="Bacteria"/>
</dbReference>
<dbReference type="HOGENOM" id="CLU_089696_3_1_6"/>
<dbReference type="OrthoDB" id="517356at2"/>
<dbReference type="Proteomes" id="UP000000230">
    <property type="component" value="Chromosome"/>
</dbReference>
<dbReference type="GO" id="GO:0005737">
    <property type="term" value="C:cytoplasm"/>
    <property type="evidence" value="ECO:0007669"/>
    <property type="project" value="UniProtKB-SubCell"/>
</dbReference>
<dbReference type="GO" id="GO:0008897">
    <property type="term" value="F:holo-[acyl-carrier-protein] synthase activity"/>
    <property type="evidence" value="ECO:0007669"/>
    <property type="project" value="UniProtKB-UniRule"/>
</dbReference>
<dbReference type="GO" id="GO:0000287">
    <property type="term" value="F:magnesium ion binding"/>
    <property type="evidence" value="ECO:0007669"/>
    <property type="project" value="UniProtKB-UniRule"/>
</dbReference>
<dbReference type="GO" id="GO:0006633">
    <property type="term" value="P:fatty acid biosynthetic process"/>
    <property type="evidence" value="ECO:0007669"/>
    <property type="project" value="UniProtKB-UniRule"/>
</dbReference>
<dbReference type="FunFam" id="3.90.470.20:FF:000001">
    <property type="entry name" value="Holo-[acyl-carrier-protein] synthase"/>
    <property type="match status" value="1"/>
</dbReference>
<dbReference type="Gene3D" id="3.90.470.20">
    <property type="entry name" value="4'-phosphopantetheinyl transferase domain"/>
    <property type="match status" value="1"/>
</dbReference>
<dbReference type="HAMAP" id="MF_00101">
    <property type="entry name" value="AcpS"/>
    <property type="match status" value="1"/>
</dbReference>
<dbReference type="InterPro" id="IPR008278">
    <property type="entry name" value="4-PPantetheinyl_Trfase_dom"/>
</dbReference>
<dbReference type="InterPro" id="IPR037143">
    <property type="entry name" value="4-PPantetheinyl_Trfase_dom_sf"/>
</dbReference>
<dbReference type="InterPro" id="IPR002582">
    <property type="entry name" value="ACPS"/>
</dbReference>
<dbReference type="InterPro" id="IPR004568">
    <property type="entry name" value="Ppantetheine-prot_Trfase_dom"/>
</dbReference>
<dbReference type="NCBIfam" id="TIGR00516">
    <property type="entry name" value="acpS"/>
    <property type="match status" value="1"/>
</dbReference>
<dbReference type="NCBIfam" id="TIGR00556">
    <property type="entry name" value="pantethn_trn"/>
    <property type="match status" value="1"/>
</dbReference>
<dbReference type="Pfam" id="PF01648">
    <property type="entry name" value="ACPS"/>
    <property type="match status" value="1"/>
</dbReference>
<dbReference type="SUPFAM" id="SSF56214">
    <property type="entry name" value="4'-phosphopantetheinyl transferase"/>
    <property type="match status" value="1"/>
</dbReference>
<gene>
    <name evidence="1" type="primary">acpS</name>
    <name type="ordered locus">Ent638_3050</name>
</gene>
<sequence length="126" mass="14092">MAILGLGTDIVEIGRIEAVIARSGDRLARRVLSDNEWAIWETHQQPVRFLAKRFAVKEAAAKAFGTGIRNGLAFNQFEVFNDELGKPRLRLWGEAQKLAEKLGVVNMHVTLADERRYACATVILES</sequence>
<evidence type="ECO:0000255" key="1">
    <source>
        <dbReference type="HAMAP-Rule" id="MF_00101"/>
    </source>
</evidence>
<protein>
    <recommendedName>
        <fullName evidence="1">Holo-[acyl-carrier-protein] synthase</fullName>
        <shortName evidence="1">Holo-ACP synthase</shortName>
        <ecNumber evidence="1">2.7.8.7</ecNumber>
    </recommendedName>
    <alternativeName>
        <fullName evidence="1">4'-phosphopantetheinyl transferase AcpS</fullName>
    </alternativeName>
</protein>
<reference key="1">
    <citation type="journal article" date="2010" name="PLoS Genet.">
        <title>Genome sequence of the plant growth promoting endophytic bacterium Enterobacter sp. 638.</title>
        <authorList>
            <person name="Taghavi S."/>
            <person name="van der Lelie D."/>
            <person name="Hoffman A."/>
            <person name="Zhang Y.B."/>
            <person name="Walla M.D."/>
            <person name="Vangronsveld J."/>
            <person name="Newman L."/>
            <person name="Monchy S."/>
        </authorList>
    </citation>
    <scope>NUCLEOTIDE SEQUENCE [LARGE SCALE GENOMIC DNA]</scope>
    <source>
        <strain>638</strain>
    </source>
</reference>
<name>ACPS_ENT38</name>